<protein>
    <recommendedName>
        <fullName evidence="1">Ribosome maturation factor RimM</fullName>
    </recommendedName>
</protein>
<comment type="function">
    <text evidence="1">An accessory protein needed during the final step in the assembly of 30S ribosomal subunit, possibly for assembly of the head region. Essential for efficient processing of 16S rRNA. May be needed both before and after RbfA during the maturation of 16S rRNA. It has affinity for free ribosomal 30S subunits but not for 70S ribosomes.</text>
</comment>
<comment type="subunit">
    <text evidence="1">Binds ribosomal protein uS19.</text>
</comment>
<comment type="subcellular location">
    <subcellularLocation>
        <location evidence="1">Cytoplasm</location>
    </subcellularLocation>
</comment>
<comment type="domain">
    <text evidence="1">The PRC barrel domain binds ribosomal protein uS19.</text>
</comment>
<comment type="similarity">
    <text evidence="1">Belongs to the RimM family.</text>
</comment>
<name>RIMM_FUSNN</name>
<evidence type="ECO:0000255" key="1">
    <source>
        <dbReference type="HAMAP-Rule" id="MF_00014"/>
    </source>
</evidence>
<sequence>MELLIAGKVLGSHNLKGEVKVISDLDNIEVLVGNKVILELADSQQKLLTIKKIEHLVANKWIFSFEEIKNKQDTIEIRNANIKVRRDIVGIGEDEYLVSDMIGFKVYDVKGDEYLGEITEIMDTAAHDIYVIESEEFETMIPDVDVFIKNIDFENRKMLVDTIEGMKESKVKK</sequence>
<keyword id="KW-0143">Chaperone</keyword>
<keyword id="KW-0963">Cytoplasm</keyword>
<keyword id="KW-1185">Reference proteome</keyword>
<keyword id="KW-0690">Ribosome biogenesis</keyword>
<keyword id="KW-0698">rRNA processing</keyword>
<feature type="chain" id="PRO_0000163292" description="Ribosome maturation factor RimM">
    <location>
        <begin position="1"/>
        <end position="173"/>
    </location>
</feature>
<feature type="domain" description="PRC barrel" evidence="1">
    <location>
        <begin position="93"/>
        <end position="166"/>
    </location>
</feature>
<gene>
    <name evidence="1" type="primary">rimM</name>
    <name type="ordered locus">FN0284</name>
</gene>
<dbReference type="EMBL" id="AE009951">
    <property type="protein sequence ID" value="AAL94490.1"/>
    <property type="molecule type" value="Genomic_DNA"/>
</dbReference>
<dbReference type="RefSeq" id="NP_603191.1">
    <property type="nucleotide sequence ID" value="NC_003454.1"/>
</dbReference>
<dbReference type="RefSeq" id="WP_005904385.1">
    <property type="nucleotide sequence ID" value="NZ_OZ209243.1"/>
</dbReference>
<dbReference type="SMR" id="Q8RGK8"/>
<dbReference type="FunCoup" id="Q8RGK8">
    <property type="interactions" value="304"/>
</dbReference>
<dbReference type="STRING" id="190304.FN0284"/>
<dbReference type="PaxDb" id="190304-FN0284"/>
<dbReference type="EnsemblBacteria" id="AAL94490">
    <property type="protein sequence ID" value="AAL94490"/>
    <property type="gene ID" value="FN0284"/>
</dbReference>
<dbReference type="GeneID" id="79783295"/>
<dbReference type="KEGG" id="fnu:FN0284"/>
<dbReference type="PATRIC" id="fig|190304.8.peg.864"/>
<dbReference type="eggNOG" id="COG0806">
    <property type="taxonomic scope" value="Bacteria"/>
</dbReference>
<dbReference type="HOGENOM" id="CLU_077636_3_2_0"/>
<dbReference type="InParanoid" id="Q8RGK8"/>
<dbReference type="BioCyc" id="FNUC190304:G1FZS-882-MONOMER"/>
<dbReference type="Proteomes" id="UP000002521">
    <property type="component" value="Chromosome"/>
</dbReference>
<dbReference type="GO" id="GO:0005829">
    <property type="term" value="C:cytosol"/>
    <property type="evidence" value="ECO:0000318"/>
    <property type="project" value="GO_Central"/>
</dbReference>
<dbReference type="GO" id="GO:0005840">
    <property type="term" value="C:ribosome"/>
    <property type="evidence" value="ECO:0007669"/>
    <property type="project" value="InterPro"/>
</dbReference>
<dbReference type="GO" id="GO:0043022">
    <property type="term" value="F:ribosome binding"/>
    <property type="evidence" value="ECO:0007669"/>
    <property type="project" value="InterPro"/>
</dbReference>
<dbReference type="GO" id="GO:0030490">
    <property type="term" value="P:maturation of SSU-rRNA"/>
    <property type="evidence" value="ECO:0000318"/>
    <property type="project" value="GO_Central"/>
</dbReference>
<dbReference type="Gene3D" id="2.30.30.240">
    <property type="entry name" value="PRC-barrel domain"/>
    <property type="match status" value="1"/>
</dbReference>
<dbReference type="Gene3D" id="2.40.30.60">
    <property type="entry name" value="RimM"/>
    <property type="match status" value="1"/>
</dbReference>
<dbReference type="HAMAP" id="MF_00014">
    <property type="entry name" value="Ribosome_mat_RimM"/>
    <property type="match status" value="1"/>
</dbReference>
<dbReference type="InterPro" id="IPR011033">
    <property type="entry name" value="PRC_barrel-like_sf"/>
</dbReference>
<dbReference type="InterPro" id="IPR056792">
    <property type="entry name" value="PRC_RimM"/>
</dbReference>
<dbReference type="InterPro" id="IPR011961">
    <property type="entry name" value="RimM"/>
</dbReference>
<dbReference type="InterPro" id="IPR002676">
    <property type="entry name" value="RimM_N"/>
</dbReference>
<dbReference type="InterPro" id="IPR036976">
    <property type="entry name" value="RimM_N_sf"/>
</dbReference>
<dbReference type="InterPro" id="IPR009000">
    <property type="entry name" value="Transl_B-barrel_sf"/>
</dbReference>
<dbReference type="NCBIfam" id="TIGR02273">
    <property type="entry name" value="16S_RimM"/>
    <property type="match status" value="1"/>
</dbReference>
<dbReference type="PANTHER" id="PTHR33692">
    <property type="entry name" value="RIBOSOME MATURATION FACTOR RIMM"/>
    <property type="match status" value="1"/>
</dbReference>
<dbReference type="PANTHER" id="PTHR33692:SF1">
    <property type="entry name" value="RIBOSOME MATURATION FACTOR RIMM"/>
    <property type="match status" value="1"/>
</dbReference>
<dbReference type="Pfam" id="PF24986">
    <property type="entry name" value="PRC_RimM"/>
    <property type="match status" value="1"/>
</dbReference>
<dbReference type="Pfam" id="PF01782">
    <property type="entry name" value="RimM"/>
    <property type="match status" value="1"/>
</dbReference>
<dbReference type="SUPFAM" id="SSF50346">
    <property type="entry name" value="PRC-barrel domain"/>
    <property type="match status" value="1"/>
</dbReference>
<dbReference type="SUPFAM" id="SSF50447">
    <property type="entry name" value="Translation proteins"/>
    <property type="match status" value="1"/>
</dbReference>
<accession>Q8RGK8</accession>
<reference key="1">
    <citation type="journal article" date="2002" name="J. Bacteriol.">
        <title>Genome sequence and analysis of the oral bacterium Fusobacterium nucleatum strain ATCC 25586.</title>
        <authorList>
            <person name="Kapatral V."/>
            <person name="Anderson I."/>
            <person name="Ivanova N."/>
            <person name="Reznik G."/>
            <person name="Los T."/>
            <person name="Lykidis A."/>
            <person name="Bhattacharyya A."/>
            <person name="Bartman A."/>
            <person name="Gardner W."/>
            <person name="Grechkin G."/>
            <person name="Zhu L."/>
            <person name="Vasieva O."/>
            <person name="Chu L."/>
            <person name="Kogan Y."/>
            <person name="Chaga O."/>
            <person name="Goltsman E."/>
            <person name="Bernal A."/>
            <person name="Larsen N."/>
            <person name="D'Souza M."/>
            <person name="Walunas T."/>
            <person name="Pusch G."/>
            <person name="Haselkorn R."/>
            <person name="Fonstein M."/>
            <person name="Kyrpides N.C."/>
            <person name="Overbeek R."/>
        </authorList>
    </citation>
    <scope>NUCLEOTIDE SEQUENCE [LARGE SCALE GENOMIC DNA]</scope>
    <source>
        <strain>ATCC 25586 / DSM 15643 / BCRC 10681 / CIP 101130 / JCM 8532 / KCTC 2640 / LMG 13131 / VPI 4355</strain>
    </source>
</reference>
<proteinExistence type="inferred from homology"/>
<organism>
    <name type="scientific">Fusobacterium nucleatum subsp. nucleatum (strain ATCC 25586 / DSM 15643 / BCRC 10681 / CIP 101130 / JCM 8532 / KCTC 2640 / LMG 13131 / VPI 4355)</name>
    <dbReference type="NCBI Taxonomy" id="190304"/>
    <lineage>
        <taxon>Bacteria</taxon>
        <taxon>Fusobacteriati</taxon>
        <taxon>Fusobacteriota</taxon>
        <taxon>Fusobacteriia</taxon>
        <taxon>Fusobacteriales</taxon>
        <taxon>Fusobacteriaceae</taxon>
        <taxon>Fusobacterium</taxon>
    </lineage>
</organism>